<keyword id="KW-0067">ATP-binding</keyword>
<keyword id="KW-0418">Kinase</keyword>
<keyword id="KW-0460">Magnesium</keyword>
<keyword id="KW-0479">Metal-binding</keyword>
<keyword id="KW-0547">Nucleotide-binding</keyword>
<keyword id="KW-1185">Reference proteome</keyword>
<keyword id="KW-0711">Selenium</keyword>
<keyword id="KW-0808">Transferase</keyword>
<proteinExistence type="inferred from homology"/>
<dbReference type="EC" id="2.7.9.3" evidence="1"/>
<dbReference type="EMBL" id="AE006468">
    <property type="protein sequence ID" value="AAL20222.1"/>
    <property type="molecule type" value="Genomic_DNA"/>
</dbReference>
<dbReference type="EMBL" id="AF147202">
    <property type="protein sequence ID" value="AAD43089.1"/>
    <property type="status" value="ALT_INIT"/>
    <property type="molecule type" value="Genomic_DNA"/>
</dbReference>
<dbReference type="RefSeq" id="NP_460263.1">
    <property type="nucleotide sequence ID" value="NC_003197.2"/>
</dbReference>
<dbReference type="RefSeq" id="WP_001294900.1">
    <property type="nucleotide sequence ID" value="NC_003197.2"/>
</dbReference>
<dbReference type="SMR" id="Q8ZPV5"/>
<dbReference type="STRING" id="99287.STM1297"/>
<dbReference type="PaxDb" id="99287-STM1297"/>
<dbReference type="GeneID" id="1252815"/>
<dbReference type="KEGG" id="stm:STM1297"/>
<dbReference type="PATRIC" id="fig|99287.12.peg.1378"/>
<dbReference type="HOGENOM" id="CLU_032859_0_1_6"/>
<dbReference type="OMA" id="LARDWMC"/>
<dbReference type="PhylomeDB" id="Q8ZPV5"/>
<dbReference type="BioCyc" id="SENT99287:STM1297-MONOMER"/>
<dbReference type="Proteomes" id="UP000001014">
    <property type="component" value="Chromosome"/>
</dbReference>
<dbReference type="GO" id="GO:0005737">
    <property type="term" value="C:cytoplasm"/>
    <property type="evidence" value="ECO:0000318"/>
    <property type="project" value="GO_Central"/>
</dbReference>
<dbReference type="GO" id="GO:0005524">
    <property type="term" value="F:ATP binding"/>
    <property type="evidence" value="ECO:0007669"/>
    <property type="project" value="UniProtKB-UniRule"/>
</dbReference>
<dbReference type="GO" id="GO:0000287">
    <property type="term" value="F:magnesium ion binding"/>
    <property type="evidence" value="ECO:0007669"/>
    <property type="project" value="UniProtKB-UniRule"/>
</dbReference>
<dbReference type="GO" id="GO:0004756">
    <property type="term" value="F:selenide, water dikinase activity"/>
    <property type="evidence" value="ECO:0000318"/>
    <property type="project" value="GO_Central"/>
</dbReference>
<dbReference type="GO" id="GO:0016260">
    <property type="term" value="P:selenocysteine biosynthetic process"/>
    <property type="evidence" value="ECO:0000318"/>
    <property type="project" value="GO_Central"/>
</dbReference>
<dbReference type="CDD" id="cd02195">
    <property type="entry name" value="SelD"/>
    <property type="match status" value="1"/>
</dbReference>
<dbReference type="FunFam" id="3.30.1330.10:FF:000003">
    <property type="entry name" value="Selenide, water dikinase"/>
    <property type="match status" value="1"/>
</dbReference>
<dbReference type="FunFam" id="3.90.650.10:FF:000004">
    <property type="entry name" value="Selenide, water dikinase"/>
    <property type="match status" value="1"/>
</dbReference>
<dbReference type="Gene3D" id="3.90.650.10">
    <property type="entry name" value="PurM-like C-terminal domain"/>
    <property type="match status" value="1"/>
</dbReference>
<dbReference type="Gene3D" id="3.30.1330.10">
    <property type="entry name" value="PurM-like, N-terminal domain"/>
    <property type="match status" value="1"/>
</dbReference>
<dbReference type="HAMAP" id="MF_00625">
    <property type="entry name" value="SelD"/>
    <property type="match status" value="1"/>
</dbReference>
<dbReference type="InterPro" id="IPR010918">
    <property type="entry name" value="PurM-like_C_dom"/>
</dbReference>
<dbReference type="InterPro" id="IPR036676">
    <property type="entry name" value="PurM-like_C_sf"/>
</dbReference>
<dbReference type="InterPro" id="IPR016188">
    <property type="entry name" value="PurM-like_N"/>
</dbReference>
<dbReference type="InterPro" id="IPR036921">
    <property type="entry name" value="PurM-like_N_sf"/>
</dbReference>
<dbReference type="InterPro" id="IPR023061">
    <property type="entry name" value="SelD_I"/>
</dbReference>
<dbReference type="InterPro" id="IPR004536">
    <property type="entry name" value="SPS/SelD"/>
</dbReference>
<dbReference type="NCBIfam" id="NF002098">
    <property type="entry name" value="PRK00943.1"/>
    <property type="match status" value="1"/>
</dbReference>
<dbReference type="NCBIfam" id="TIGR00476">
    <property type="entry name" value="selD"/>
    <property type="match status" value="1"/>
</dbReference>
<dbReference type="PANTHER" id="PTHR10256:SF0">
    <property type="entry name" value="INACTIVE SELENIDE, WATER DIKINASE-LIKE PROTEIN-RELATED"/>
    <property type="match status" value="1"/>
</dbReference>
<dbReference type="PANTHER" id="PTHR10256">
    <property type="entry name" value="SELENIDE, WATER DIKINASE"/>
    <property type="match status" value="1"/>
</dbReference>
<dbReference type="Pfam" id="PF00586">
    <property type="entry name" value="AIRS"/>
    <property type="match status" value="1"/>
</dbReference>
<dbReference type="Pfam" id="PF02769">
    <property type="entry name" value="AIRS_C"/>
    <property type="match status" value="1"/>
</dbReference>
<dbReference type="PIRSF" id="PIRSF036407">
    <property type="entry name" value="Selenphspht_syn"/>
    <property type="match status" value="1"/>
</dbReference>
<dbReference type="SUPFAM" id="SSF56042">
    <property type="entry name" value="PurM C-terminal domain-like"/>
    <property type="match status" value="1"/>
</dbReference>
<dbReference type="SUPFAM" id="SSF55326">
    <property type="entry name" value="PurM N-terminal domain-like"/>
    <property type="match status" value="1"/>
</dbReference>
<evidence type="ECO:0000255" key="1">
    <source>
        <dbReference type="HAMAP-Rule" id="MF_00625"/>
    </source>
</evidence>
<evidence type="ECO:0000305" key="2"/>
<reference key="1">
    <citation type="journal article" date="2001" name="Nature">
        <title>Complete genome sequence of Salmonella enterica serovar Typhimurium LT2.</title>
        <authorList>
            <person name="McClelland M."/>
            <person name="Sanderson K.E."/>
            <person name="Spieth J."/>
            <person name="Clifton S.W."/>
            <person name="Latreille P."/>
            <person name="Courtney L."/>
            <person name="Porwollik S."/>
            <person name="Ali J."/>
            <person name="Dante M."/>
            <person name="Du F."/>
            <person name="Hou S."/>
            <person name="Layman D."/>
            <person name="Leonard S."/>
            <person name="Nguyen C."/>
            <person name="Scott K."/>
            <person name="Holmes A."/>
            <person name="Grewal N."/>
            <person name="Mulvaney E."/>
            <person name="Ryan E."/>
            <person name="Sun H."/>
            <person name="Florea L."/>
            <person name="Miller W."/>
            <person name="Stoneking T."/>
            <person name="Nhan M."/>
            <person name="Waterston R."/>
            <person name="Wilson R.K."/>
        </authorList>
    </citation>
    <scope>NUCLEOTIDE SEQUENCE [LARGE SCALE GENOMIC DNA]</scope>
    <source>
        <strain>LT2 / SGSC1412 / ATCC 700720</strain>
    </source>
</reference>
<reference key="2">
    <citation type="submission" date="1999-04" db="EMBL/GenBank/DDBJ databases">
        <title>Mutations that permit the expression of fdhF in a selD mutant of Salmonella typhimurium.</title>
        <authorList>
            <person name="Hallenbeck P.C."/>
        </authorList>
    </citation>
    <scope>NUCLEOTIDE SEQUENCE [GENOMIC DNA] OF 1-157</scope>
</reference>
<comment type="function">
    <text evidence="1">Synthesizes selenophosphate from selenide and ATP.</text>
</comment>
<comment type="catalytic activity">
    <reaction evidence="1">
        <text>hydrogenselenide + ATP + H2O = selenophosphate + AMP + phosphate + 2 H(+)</text>
        <dbReference type="Rhea" id="RHEA:18737"/>
        <dbReference type="ChEBI" id="CHEBI:15377"/>
        <dbReference type="ChEBI" id="CHEBI:15378"/>
        <dbReference type="ChEBI" id="CHEBI:16144"/>
        <dbReference type="ChEBI" id="CHEBI:29317"/>
        <dbReference type="ChEBI" id="CHEBI:30616"/>
        <dbReference type="ChEBI" id="CHEBI:43474"/>
        <dbReference type="ChEBI" id="CHEBI:456215"/>
        <dbReference type="EC" id="2.7.9.3"/>
    </reaction>
</comment>
<comment type="cofactor">
    <cofactor evidence="1">
        <name>Mg(2+)</name>
        <dbReference type="ChEBI" id="CHEBI:18420"/>
    </cofactor>
    <text evidence="1">Binds 1 Mg(2+) ion per monomer.</text>
</comment>
<comment type="subunit">
    <text evidence="1">Homodimer.</text>
</comment>
<comment type="similarity">
    <text evidence="1">Belongs to the selenophosphate synthase 1 family. Class I subfamily.</text>
</comment>
<comment type="sequence caution" evidence="2">
    <conflict type="erroneous initiation">
        <sequence resource="EMBL-CDS" id="AAD43089"/>
    </conflict>
</comment>
<gene>
    <name evidence="1" type="primary">selD</name>
    <name type="ordered locus">STM1297</name>
</gene>
<protein>
    <recommendedName>
        <fullName evidence="1">Selenide, water dikinase</fullName>
        <ecNumber evidence="1">2.7.9.3</ecNumber>
    </recommendedName>
    <alternativeName>
        <fullName evidence="1">Selenium donor protein</fullName>
    </alternativeName>
    <alternativeName>
        <fullName evidence="1">Selenophosphate synthase</fullName>
    </alternativeName>
</protein>
<organism>
    <name type="scientific">Salmonella typhimurium (strain LT2 / SGSC1412 / ATCC 700720)</name>
    <dbReference type="NCBI Taxonomy" id="99287"/>
    <lineage>
        <taxon>Bacteria</taxon>
        <taxon>Pseudomonadati</taxon>
        <taxon>Pseudomonadota</taxon>
        <taxon>Gammaproteobacteria</taxon>
        <taxon>Enterobacterales</taxon>
        <taxon>Enterobacteriaceae</taxon>
        <taxon>Salmonella</taxon>
    </lineage>
</organism>
<accession>Q8ZPV5</accession>
<accession>Q9XC76</accession>
<sequence>MSEQAIRLTQYSHGAGCGCKISPKVLETILHSEQAKFVDPNLLVGNETRDDAAVYDLGNGTSIISTTDFFMPIVDNPFDFGRIAATNAISDIFAMGGKPIMAIAILGWPINTLSPDIAREVTEGGRFACRQAGIALAGGHSIDAPEPIFGLAVTGVVPTERVKKNSTAQAGCKLFLTKPLGIGVLTTAEKKSLLKPEHQGLATEVMCRMNVAGAAFANIDGVKAMTDVTGFGLLGHLSEMCQGAGVQALLCYQDIPKLPGVEEYIALGAVPGGTERNFASYGHLMGDMSREVRSLLCDPQTSGGLLLAVTPDAEDDVKATAAEFGIDLTAIGELVEARGGRAMVEIR</sequence>
<feature type="chain" id="PRO_0000127638" description="Selenide, water dikinase">
    <location>
        <begin position="1"/>
        <end position="347"/>
    </location>
</feature>
<feature type="active site" evidence="1">
    <location>
        <position position="17"/>
    </location>
</feature>
<feature type="binding site" description="in other chain" evidence="1">
    <location>
        <position position="20"/>
    </location>
    <ligand>
        <name>ATP</name>
        <dbReference type="ChEBI" id="CHEBI:30616"/>
        <note>ligand shared between dimeric partners</note>
    </ligand>
</feature>
<feature type="binding site" description="in other chain" evidence="1">
    <location>
        <begin position="48"/>
        <end position="50"/>
    </location>
    <ligand>
        <name>ATP</name>
        <dbReference type="ChEBI" id="CHEBI:30616"/>
        <note>ligand shared between dimeric partners</note>
    </ligand>
</feature>
<feature type="binding site" evidence="1">
    <location>
        <position position="51"/>
    </location>
    <ligand>
        <name>Mg(2+)</name>
        <dbReference type="ChEBI" id="CHEBI:18420"/>
    </ligand>
</feature>
<feature type="binding site" description="in other chain" evidence="1">
    <location>
        <position position="68"/>
    </location>
    <ligand>
        <name>ATP</name>
        <dbReference type="ChEBI" id="CHEBI:30616"/>
        <note>ligand shared between dimeric partners</note>
    </ligand>
</feature>
<feature type="binding site" description="in other chain" evidence="1">
    <location>
        <position position="91"/>
    </location>
    <ligand>
        <name>ATP</name>
        <dbReference type="ChEBI" id="CHEBI:30616"/>
        <note>ligand shared between dimeric partners</note>
    </ligand>
</feature>
<feature type="binding site" evidence="1">
    <location>
        <position position="91"/>
    </location>
    <ligand>
        <name>Mg(2+)</name>
        <dbReference type="ChEBI" id="CHEBI:18420"/>
    </ligand>
</feature>
<feature type="binding site" evidence="1">
    <location>
        <begin position="139"/>
        <end position="141"/>
    </location>
    <ligand>
        <name>ATP</name>
        <dbReference type="ChEBI" id="CHEBI:30616"/>
        <note>ligand shared between dimeric partners</note>
    </ligand>
</feature>
<feature type="binding site" evidence="1">
    <location>
        <position position="227"/>
    </location>
    <ligand>
        <name>Mg(2+)</name>
        <dbReference type="ChEBI" id="CHEBI:18420"/>
    </ligand>
</feature>
<feature type="site" description="Important for catalytic activity" evidence="1">
    <location>
        <position position="20"/>
    </location>
</feature>
<feature type="sequence conflict" description="In Ref. 2; AAD43089." evidence="2" ref="2">
    <original>GR</original>
    <variation>AG</variation>
    <location>
        <begin position="81"/>
        <end position="82"/>
    </location>
</feature>
<name>SELD_SALTY</name>